<gene>
    <name type="primary">ARHGAP15</name>
</gene>
<accession>A4IF90</accession>
<organism>
    <name type="scientific">Bos taurus</name>
    <name type="common">Bovine</name>
    <dbReference type="NCBI Taxonomy" id="9913"/>
    <lineage>
        <taxon>Eukaryota</taxon>
        <taxon>Metazoa</taxon>
        <taxon>Chordata</taxon>
        <taxon>Craniata</taxon>
        <taxon>Vertebrata</taxon>
        <taxon>Euteleostomi</taxon>
        <taxon>Mammalia</taxon>
        <taxon>Eutheria</taxon>
        <taxon>Laurasiatheria</taxon>
        <taxon>Artiodactyla</taxon>
        <taxon>Ruminantia</taxon>
        <taxon>Pecora</taxon>
        <taxon>Bovidae</taxon>
        <taxon>Bovinae</taxon>
        <taxon>Bos</taxon>
    </lineage>
</organism>
<comment type="function">
    <text evidence="1">GTPase activator for the Rho-type GTPases by converting them to an inactive GDP-bound state. Has activity toward RAC1. Overexpression results in an increase in actin stress fibers and cell contraction (By similarity).</text>
</comment>
<comment type="subcellular location">
    <subcellularLocation>
        <location evidence="1">Cytoplasm</location>
    </subcellularLocation>
    <subcellularLocation>
        <location evidence="1">Membrane</location>
        <topology evidence="1">Peripheral membrane protein</topology>
    </subcellularLocation>
</comment>
<comment type="domain">
    <text evidence="1">The PH domain is required for localization to the membrane.</text>
</comment>
<reference key="1">
    <citation type="submission" date="2007-03" db="EMBL/GenBank/DDBJ databases">
        <authorList>
            <consortium name="NIH - Mammalian Gene Collection (MGC) project"/>
        </authorList>
    </citation>
    <scope>NUCLEOTIDE SEQUENCE [LARGE SCALE MRNA]</scope>
    <source>
        <strain>Hereford</strain>
        <tissue>Thymus</tissue>
    </source>
</reference>
<protein>
    <recommendedName>
        <fullName>Rho GTPase-activating protein 15</fullName>
    </recommendedName>
    <alternativeName>
        <fullName>ArhGAP15</fullName>
    </alternativeName>
    <alternativeName>
        <fullName>Rho-type GTPase-activating protein 15</fullName>
    </alternativeName>
</protein>
<name>RHG15_BOVIN</name>
<proteinExistence type="evidence at transcript level"/>
<sequence length="471" mass="54110">MQKSTNSDIPVETLNPTRQGTGAVQMRIKNANSHHDRLSQSKSMILTEVGKVTEPISRHRRNHSQHILKDVIPPLEQLMVEKEGYLQKAKIADGGKKLRKNWTTSWIVLSSRKIEFYKESKQQALSNMKTGNKPESVDLCGAHIEWAKEKSSRKNVFQITTLSGNEFLLQSDIDFIILDWFHAIKNAIDRLPKDPSSHSRNLELFKIQRSSSTELLSHYDSDTKEQKPEHRKSLMFRLHHSASDTSDKNRVKSRLKKFITRRPSLKTLQEKGLIKDQIFGSHLHTLCEREKSTVPRFVKQCIEAVEKRGLDVDGIYRVSGNLATIQKLRFIVNQEEKLNLDDSQWEDIHVVTGALKMFFRDLPEPLFPYSFFEQFVEAIKKQDNNTRIEAIKSLVQKLPPPNRDTMKVLFGHLTKIVARASKNLMSTHSLGIVFGPTLLRAEDESGNMAVHMVYQNQIAELMLSAYDQIFS</sequence>
<evidence type="ECO:0000250" key="1"/>
<evidence type="ECO:0000250" key="2">
    <source>
        <dbReference type="UniProtKB" id="Q53QZ3"/>
    </source>
</evidence>
<evidence type="ECO:0000250" key="3">
    <source>
        <dbReference type="UniProtKB" id="Q6AYC5"/>
    </source>
</evidence>
<evidence type="ECO:0000250" key="4">
    <source>
        <dbReference type="UniProtKB" id="Q811M1"/>
    </source>
</evidence>
<evidence type="ECO:0000255" key="5">
    <source>
        <dbReference type="PROSITE-ProRule" id="PRU00145"/>
    </source>
</evidence>
<evidence type="ECO:0000255" key="6">
    <source>
        <dbReference type="PROSITE-ProRule" id="PRU00172"/>
    </source>
</evidence>
<evidence type="ECO:0000256" key="7">
    <source>
        <dbReference type="SAM" id="MobiDB-lite"/>
    </source>
</evidence>
<keyword id="KW-0963">Cytoplasm</keyword>
<keyword id="KW-0343">GTPase activation</keyword>
<keyword id="KW-0472">Membrane</keyword>
<keyword id="KW-0597">Phosphoprotein</keyword>
<keyword id="KW-1185">Reference proteome</keyword>
<dbReference type="EMBL" id="BC134460">
    <property type="protein sequence ID" value="AAI34461.1"/>
    <property type="molecule type" value="mRNA"/>
</dbReference>
<dbReference type="RefSeq" id="NP_001098473.1">
    <property type="nucleotide sequence ID" value="NM_001105003.2"/>
</dbReference>
<dbReference type="SMR" id="A4IF90"/>
<dbReference type="FunCoup" id="A4IF90">
    <property type="interactions" value="467"/>
</dbReference>
<dbReference type="STRING" id="9913.ENSBTAP00000053462"/>
<dbReference type="PaxDb" id="9913-ENSBTAP00000053462"/>
<dbReference type="Ensembl" id="ENSBTAT00000133082.1">
    <property type="protein sequence ID" value="ENSBTAP00000091194.1"/>
    <property type="gene ID" value="ENSBTAG00000032289.6"/>
</dbReference>
<dbReference type="GeneID" id="616246"/>
<dbReference type="KEGG" id="bta:616246"/>
<dbReference type="CTD" id="55843"/>
<dbReference type="VEuPathDB" id="HostDB:ENSBTAG00000032289"/>
<dbReference type="VGNC" id="VGNC:26076">
    <property type="gene designation" value="ARHGAP15"/>
</dbReference>
<dbReference type="eggNOG" id="KOG1450">
    <property type="taxonomic scope" value="Eukaryota"/>
</dbReference>
<dbReference type="eggNOG" id="KOG1453">
    <property type="taxonomic scope" value="Eukaryota"/>
</dbReference>
<dbReference type="GeneTree" id="ENSGT00950000182860"/>
<dbReference type="HOGENOM" id="CLU_015883_1_0_1"/>
<dbReference type="InParanoid" id="A4IF90"/>
<dbReference type="OMA" id="DHNQWED"/>
<dbReference type="OrthoDB" id="79452at2759"/>
<dbReference type="TreeFam" id="TF329345"/>
<dbReference type="Reactome" id="R-BTA-9013149">
    <property type="pathway name" value="RAC1 GTPase cycle"/>
</dbReference>
<dbReference type="Reactome" id="R-BTA-9013423">
    <property type="pathway name" value="RAC3 GTPase cycle"/>
</dbReference>
<dbReference type="Proteomes" id="UP000009136">
    <property type="component" value="Chromosome 2"/>
</dbReference>
<dbReference type="Bgee" id="ENSBTAG00000032289">
    <property type="expression patterns" value="Expressed in neutrophil and 99 other cell types or tissues"/>
</dbReference>
<dbReference type="GO" id="GO:0005737">
    <property type="term" value="C:cytoplasm"/>
    <property type="evidence" value="ECO:0000318"/>
    <property type="project" value="GO_Central"/>
</dbReference>
<dbReference type="GO" id="GO:0005886">
    <property type="term" value="C:plasma membrane"/>
    <property type="evidence" value="ECO:0000318"/>
    <property type="project" value="GO_Central"/>
</dbReference>
<dbReference type="GO" id="GO:0005096">
    <property type="term" value="F:GTPase activator activity"/>
    <property type="evidence" value="ECO:0000318"/>
    <property type="project" value="GO_Central"/>
</dbReference>
<dbReference type="GO" id="GO:0007264">
    <property type="term" value="P:small GTPase-mediated signal transduction"/>
    <property type="evidence" value="ECO:0000318"/>
    <property type="project" value="GO_Central"/>
</dbReference>
<dbReference type="CDD" id="cd13233">
    <property type="entry name" value="PH_ARHGAP9-like"/>
    <property type="match status" value="1"/>
</dbReference>
<dbReference type="CDD" id="cd04403">
    <property type="entry name" value="RhoGAP_ARHGAP27_15_12_9"/>
    <property type="match status" value="1"/>
</dbReference>
<dbReference type="FunFam" id="1.10.555.10:FF:000003">
    <property type="entry name" value="Putative rho GTPase-activating protein 12"/>
    <property type="match status" value="1"/>
</dbReference>
<dbReference type="FunFam" id="2.30.29.30:FF:000260">
    <property type="entry name" value="Rho GTPase activating protein 15"/>
    <property type="match status" value="1"/>
</dbReference>
<dbReference type="Gene3D" id="2.30.29.30">
    <property type="entry name" value="Pleckstrin-homology domain (PH domain)/Phosphotyrosine-binding domain (PTB)"/>
    <property type="match status" value="1"/>
</dbReference>
<dbReference type="Gene3D" id="1.10.555.10">
    <property type="entry name" value="Rho GTPase activation protein"/>
    <property type="match status" value="1"/>
</dbReference>
<dbReference type="InterPro" id="IPR011993">
    <property type="entry name" value="PH-like_dom_sf"/>
</dbReference>
<dbReference type="InterPro" id="IPR001849">
    <property type="entry name" value="PH_domain"/>
</dbReference>
<dbReference type="InterPro" id="IPR050729">
    <property type="entry name" value="Rho-GAP"/>
</dbReference>
<dbReference type="InterPro" id="IPR008936">
    <property type="entry name" value="Rho_GTPase_activation_prot"/>
</dbReference>
<dbReference type="InterPro" id="IPR000198">
    <property type="entry name" value="RhoGAP_dom"/>
</dbReference>
<dbReference type="PANTHER" id="PTHR23176:SF108">
    <property type="entry name" value="RHO GTPASE-ACTIVATING PROTEIN 15"/>
    <property type="match status" value="1"/>
</dbReference>
<dbReference type="PANTHER" id="PTHR23176">
    <property type="entry name" value="RHO/RAC/CDC GTPASE-ACTIVATING PROTEIN"/>
    <property type="match status" value="1"/>
</dbReference>
<dbReference type="Pfam" id="PF00169">
    <property type="entry name" value="PH"/>
    <property type="match status" value="1"/>
</dbReference>
<dbReference type="Pfam" id="PF00620">
    <property type="entry name" value="RhoGAP"/>
    <property type="match status" value="1"/>
</dbReference>
<dbReference type="SMART" id="SM00233">
    <property type="entry name" value="PH"/>
    <property type="match status" value="1"/>
</dbReference>
<dbReference type="SMART" id="SM00324">
    <property type="entry name" value="RhoGAP"/>
    <property type="match status" value="1"/>
</dbReference>
<dbReference type="SUPFAM" id="SSF48350">
    <property type="entry name" value="GTPase activation domain, GAP"/>
    <property type="match status" value="1"/>
</dbReference>
<dbReference type="SUPFAM" id="SSF50729">
    <property type="entry name" value="PH domain-like"/>
    <property type="match status" value="1"/>
</dbReference>
<dbReference type="PROSITE" id="PS50003">
    <property type="entry name" value="PH_DOMAIN"/>
    <property type="match status" value="1"/>
</dbReference>
<dbReference type="PROSITE" id="PS50238">
    <property type="entry name" value="RHOGAP"/>
    <property type="match status" value="1"/>
</dbReference>
<feature type="chain" id="PRO_0000317573" description="Rho GTPase-activating protein 15">
    <location>
        <begin position="1"/>
        <end position="471"/>
    </location>
</feature>
<feature type="domain" description="PH" evidence="5">
    <location>
        <begin position="79"/>
        <end position="189"/>
    </location>
</feature>
<feature type="domain" description="Rho-GAP" evidence="6">
    <location>
        <begin position="281"/>
        <end position="470"/>
    </location>
</feature>
<feature type="region of interest" description="Disordered" evidence="7">
    <location>
        <begin position="1"/>
        <end position="20"/>
    </location>
</feature>
<feature type="site" description="Arginine finger; crucial for GTP hydrolysis by stabilizing the transition state" evidence="6">
    <location>
        <position position="317"/>
    </location>
</feature>
<feature type="modified residue" description="Phosphoserine" evidence="2">
    <location>
        <position position="43"/>
    </location>
</feature>
<feature type="modified residue" description="Phosphoserine" evidence="4">
    <location>
        <position position="196"/>
    </location>
</feature>
<feature type="modified residue" description="Phosphoserine" evidence="3">
    <location>
        <position position="199"/>
    </location>
</feature>
<feature type="modified residue" description="Phosphoserine" evidence="3">
    <location>
        <position position="243"/>
    </location>
</feature>